<sequence>MNKSVKKKIKDEINVIVTNLALSNNIKLDNININIQKPPKSDLGDISILMFEIGKTLKLPIEIISEEIIKNLKTKYEIKAVGPYLNIKISRKEYINNTIQMVNTQKDTYGTSKYLDNKKIILEFSSPNTNKPLHVGHLRNDVIGESLSRILKAVGAKITKINLINDRGVHICKSMLAYKKFGNGITPEKAFKKGDHLIGDFYVKYNKYSQENENAEKEIQDLLLLWEQKDVSTIELWKKLNKWAIEGIKETYEITNTSFDKIYLESEIFKIGKNVVLEGLEKGFCYKREDGAICIDLPSDSDEKADTKVKQKVLIRSNGTSIYLTQDLGNIAVRTKEFNFEEMIYVVGSEQIQHFKSLFFVAEKLGLSKNKKLIHLSHGMVNLVDGKMKSREGNVIDADNLISNLIELIIPEMTQKIENKESAKKNALNIALGAIHYYLLKSAIHKDIVFNKKESLSFTGNSGPYIQYVGARINSILEKYKALSIPVMEKIDFELLKHEKEWEIIKIISELEENIINAAKDLNPSILTSYSYSLAKHFSTYYQEVKVIDTNNINLTAARIEFLKAILQTIKNCMYLLNIPYMLKM</sequence>
<keyword id="KW-0030">Aminoacyl-tRNA synthetase</keyword>
<keyword id="KW-0067">ATP-binding</keyword>
<keyword id="KW-0963">Cytoplasm</keyword>
<keyword id="KW-0436">Ligase</keyword>
<keyword id="KW-0547">Nucleotide-binding</keyword>
<keyword id="KW-0648">Protein biosynthesis</keyword>
<keyword id="KW-1185">Reference proteome</keyword>
<proteinExistence type="inferred from homology"/>
<organism>
    <name type="scientific">Borreliella burgdorferi (strain ATCC 35210 / DSM 4680 / CIP 102532 / B31)</name>
    <name type="common">Borrelia burgdorferi</name>
    <dbReference type="NCBI Taxonomy" id="224326"/>
    <lineage>
        <taxon>Bacteria</taxon>
        <taxon>Pseudomonadati</taxon>
        <taxon>Spirochaetota</taxon>
        <taxon>Spirochaetia</taxon>
        <taxon>Spirochaetales</taxon>
        <taxon>Borreliaceae</taxon>
        <taxon>Borreliella</taxon>
    </lineage>
</organism>
<reference key="1">
    <citation type="journal article" date="1997" name="Nature">
        <title>Genomic sequence of a Lyme disease spirochaete, Borrelia burgdorferi.</title>
        <authorList>
            <person name="Fraser C.M."/>
            <person name="Casjens S."/>
            <person name="Huang W.M."/>
            <person name="Sutton G.G."/>
            <person name="Clayton R.A."/>
            <person name="Lathigra R."/>
            <person name="White O."/>
            <person name="Ketchum K.A."/>
            <person name="Dodson R.J."/>
            <person name="Hickey E.K."/>
            <person name="Gwinn M.L."/>
            <person name="Dougherty B.A."/>
            <person name="Tomb J.-F."/>
            <person name="Fleischmann R.D."/>
            <person name="Richardson D.L."/>
            <person name="Peterson J.D."/>
            <person name="Kerlavage A.R."/>
            <person name="Quackenbush J."/>
            <person name="Salzberg S.L."/>
            <person name="Hanson M."/>
            <person name="van Vugt R."/>
            <person name="Palmer N."/>
            <person name="Adams M.D."/>
            <person name="Gocayne J.D."/>
            <person name="Weidman J.F."/>
            <person name="Utterback T.R."/>
            <person name="Watthey L."/>
            <person name="McDonald L.A."/>
            <person name="Artiach P."/>
            <person name="Bowman C."/>
            <person name="Garland S.A."/>
            <person name="Fujii C."/>
            <person name="Cotton M.D."/>
            <person name="Horst K."/>
            <person name="Roberts K.M."/>
            <person name="Hatch B."/>
            <person name="Smith H.O."/>
            <person name="Venter J.C."/>
        </authorList>
    </citation>
    <scope>NUCLEOTIDE SEQUENCE [LARGE SCALE GENOMIC DNA]</scope>
    <source>
        <strain>ATCC 35210 / DSM 4680 / CIP 102532 / B31</strain>
    </source>
</reference>
<dbReference type="EC" id="6.1.1.19"/>
<dbReference type="EMBL" id="AE000783">
    <property type="protein sequence ID" value="AAC66956.2"/>
    <property type="molecule type" value="Genomic_DNA"/>
</dbReference>
<dbReference type="PIR" id="A70174">
    <property type="entry name" value="A70174"/>
</dbReference>
<dbReference type="RefSeq" id="NP_212728.2">
    <property type="nucleotide sequence ID" value="NC_001318.1"/>
</dbReference>
<dbReference type="RefSeq" id="WP_010889774.1">
    <property type="nucleotide sequence ID" value="NC_001318.1"/>
</dbReference>
<dbReference type="SMR" id="O51540"/>
<dbReference type="STRING" id="224326.BB_0594"/>
<dbReference type="PaxDb" id="224326-BB_0594"/>
<dbReference type="EnsemblBacteria" id="AAC66956">
    <property type="protein sequence ID" value="AAC66956"/>
    <property type="gene ID" value="BB_0594"/>
</dbReference>
<dbReference type="KEGG" id="bbu:BB_0594"/>
<dbReference type="PATRIC" id="fig|224326.49.peg.985"/>
<dbReference type="HOGENOM" id="CLU_006406_6_1_12"/>
<dbReference type="OrthoDB" id="9805987at2"/>
<dbReference type="Proteomes" id="UP000001807">
    <property type="component" value="Chromosome"/>
</dbReference>
<dbReference type="GO" id="GO:0005829">
    <property type="term" value="C:cytosol"/>
    <property type="evidence" value="ECO:0000314"/>
    <property type="project" value="CAFA"/>
</dbReference>
<dbReference type="GO" id="GO:0004814">
    <property type="term" value="F:arginine-tRNA ligase activity"/>
    <property type="evidence" value="ECO:0007669"/>
    <property type="project" value="UniProtKB-UniRule"/>
</dbReference>
<dbReference type="GO" id="GO:0005524">
    <property type="term" value="F:ATP binding"/>
    <property type="evidence" value="ECO:0007669"/>
    <property type="project" value="UniProtKB-UniRule"/>
</dbReference>
<dbReference type="GO" id="GO:0006420">
    <property type="term" value="P:arginyl-tRNA aminoacylation"/>
    <property type="evidence" value="ECO:0007669"/>
    <property type="project" value="UniProtKB-UniRule"/>
</dbReference>
<dbReference type="CDD" id="cd00671">
    <property type="entry name" value="ArgRS_core"/>
    <property type="match status" value="1"/>
</dbReference>
<dbReference type="FunFam" id="1.10.730.10:FF:000006">
    <property type="entry name" value="Arginyl-tRNA synthetase 2, mitochondrial"/>
    <property type="match status" value="1"/>
</dbReference>
<dbReference type="Gene3D" id="3.30.1360.70">
    <property type="entry name" value="Arginyl tRNA synthetase N-terminal domain"/>
    <property type="match status" value="1"/>
</dbReference>
<dbReference type="Gene3D" id="3.40.50.620">
    <property type="entry name" value="HUPs"/>
    <property type="match status" value="1"/>
</dbReference>
<dbReference type="Gene3D" id="1.10.730.10">
    <property type="entry name" value="Isoleucyl-tRNA Synthetase, Domain 1"/>
    <property type="match status" value="1"/>
</dbReference>
<dbReference type="HAMAP" id="MF_00123">
    <property type="entry name" value="Arg_tRNA_synth"/>
    <property type="match status" value="1"/>
</dbReference>
<dbReference type="InterPro" id="IPR001412">
    <property type="entry name" value="aa-tRNA-synth_I_CS"/>
</dbReference>
<dbReference type="InterPro" id="IPR001278">
    <property type="entry name" value="Arg-tRNA-ligase"/>
</dbReference>
<dbReference type="InterPro" id="IPR005148">
    <property type="entry name" value="Arg-tRNA-synth_N"/>
</dbReference>
<dbReference type="InterPro" id="IPR036695">
    <property type="entry name" value="Arg-tRNA-synth_N_sf"/>
</dbReference>
<dbReference type="InterPro" id="IPR035684">
    <property type="entry name" value="ArgRS_core"/>
</dbReference>
<dbReference type="InterPro" id="IPR008909">
    <property type="entry name" value="DALR_anticod-bd"/>
</dbReference>
<dbReference type="InterPro" id="IPR014729">
    <property type="entry name" value="Rossmann-like_a/b/a_fold"/>
</dbReference>
<dbReference type="InterPro" id="IPR009080">
    <property type="entry name" value="tRNAsynth_Ia_anticodon-bd"/>
</dbReference>
<dbReference type="NCBIfam" id="TIGR00456">
    <property type="entry name" value="argS"/>
    <property type="match status" value="1"/>
</dbReference>
<dbReference type="PANTHER" id="PTHR11956:SF5">
    <property type="entry name" value="ARGININE--TRNA LIGASE, CYTOPLASMIC"/>
    <property type="match status" value="1"/>
</dbReference>
<dbReference type="PANTHER" id="PTHR11956">
    <property type="entry name" value="ARGINYL-TRNA SYNTHETASE"/>
    <property type="match status" value="1"/>
</dbReference>
<dbReference type="Pfam" id="PF03485">
    <property type="entry name" value="Arg_tRNA_synt_N"/>
    <property type="match status" value="1"/>
</dbReference>
<dbReference type="Pfam" id="PF05746">
    <property type="entry name" value="DALR_1"/>
    <property type="match status" value="1"/>
</dbReference>
<dbReference type="Pfam" id="PF00750">
    <property type="entry name" value="tRNA-synt_1d"/>
    <property type="match status" value="1"/>
</dbReference>
<dbReference type="PRINTS" id="PR01038">
    <property type="entry name" value="TRNASYNTHARG"/>
</dbReference>
<dbReference type="SMART" id="SM01016">
    <property type="entry name" value="Arg_tRNA_synt_N"/>
    <property type="match status" value="1"/>
</dbReference>
<dbReference type="SMART" id="SM00836">
    <property type="entry name" value="DALR_1"/>
    <property type="match status" value="1"/>
</dbReference>
<dbReference type="SUPFAM" id="SSF47323">
    <property type="entry name" value="Anticodon-binding domain of a subclass of class I aminoacyl-tRNA synthetases"/>
    <property type="match status" value="1"/>
</dbReference>
<dbReference type="SUPFAM" id="SSF55190">
    <property type="entry name" value="Arginyl-tRNA synthetase (ArgRS), N-terminal 'additional' domain"/>
    <property type="match status" value="1"/>
</dbReference>
<dbReference type="SUPFAM" id="SSF52374">
    <property type="entry name" value="Nucleotidylyl transferase"/>
    <property type="match status" value="1"/>
</dbReference>
<dbReference type="PROSITE" id="PS00178">
    <property type="entry name" value="AA_TRNA_LIGASE_I"/>
    <property type="match status" value="1"/>
</dbReference>
<protein>
    <recommendedName>
        <fullName>Arginine--tRNA ligase</fullName>
        <ecNumber>6.1.1.19</ecNumber>
    </recommendedName>
    <alternativeName>
        <fullName>Arginyl-tRNA synthetase</fullName>
        <shortName>ArgRS</shortName>
    </alternativeName>
</protein>
<gene>
    <name type="primary">argS</name>
    <name type="ordered locus">BB_0594</name>
</gene>
<comment type="catalytic activity">
    <reaction>
        <text>tRNA(Arg) + L-arginine + ATP = L-arginyl-tRNA(Arg) + AMP + diphosphate</text>
        <dbReference type="Rhea" id="RHEA:20301"/>
        <dbReference type="Rhea" id="RHEA-COMP:9658"/>
        <dbReference type="Rhea" id="RHEA-COMP:9673"/>
        <dbReference type="ChEBI" id="CHEBI:30616"/>
        <dbReference type="ChEBI" id="CHEBI:32682"/>
        <dbReference type="ChEBI" id="CHEBI:33019"/>
        <dbReference type="ChEBI" id="CHEBI:78442"/>
        <dbReference type="ChEBI" id="CHEBI:78513"/>
        <dbReference type="ChEBI" id="CHEBI:456215"/>
        <dbReference type="EC" id="6.1.1.19"/>
    </reaction>
</comment>
<comment type="subunit">
    <text evidence="1">Monomer.</text>
</comment>
<comment type="subcellular location">
    <subcellularLocation>
        <location evidence="1">Cytoplasm</location>
    </subcellularLocation>
</comment>
<comment type="similarity">
    <text evidence="2">Belongs to the class-I aminoacyl-tRNA synthetase family.</text>
</comment>
<accession>O51540</accession>
<evidence type="ECO:0000250" key="1"/>
<evidence type="ECO:0000305" key="2"/>
<feature type="chain" id="PRO_0000151534" description="Arginine--tRNA ligase">
    <location>
        <begin position="1"/>
        <end position="585"/>
    </location>
</feature>
<feature type="short sequence motif" description="'HIGH' region">
    <location>
        <begin position="127"/>
        <end position="137"/>
    </location>
</feature>
<name>SYR_BORBU</name>